<proteinExistence type="evidence at protein level"/>
<sequence length="45" mass="5367">YPIEHGIVSNWDDMEKIWHHTFYNELRVAPEEHPVLLTEAPLNPK</sequence>
<evidence type="ECO:0000250" key="1"/>
<evidence type="ECO:0000250" key="2">
    <source>
        <dbReference type="UniProtKB" id="P68137"/>
    </source>
</evidence>
<evidence type="ECO:0000255" key="3"/>
<evidence type="ECO:0000303" key="4">
    <source>
    </source>
</evidence>
<protein>
    <recommendedName>
        <fullName evidence="4">Actin-1</fullName>
        <ecNumber evidence="2">3.6.4.-</ecNumber>
    </recommendedName>
</protein>
<keyword id="KW-0067">ATP-binding</keyword>
<keyword id="KW-0963">Cytoplasm</keyword>
<keyword id="KW-0206">Cytoskeleton</keyword>
<keyword id="KW-0378">Hydrolase</keyword>
<keyword id="KW-0547">Nucleotide-binding</keyword>
<accession>P85911</accession>
<feature type="chain" id="PRO_0000347320" description="Actin-1">
    <location>
        <begin position="1" status="less than"/>
        <end position="45" status="greater than"/>
    </location>
</feature>
<feature type="non-terminal residue" evidence="4">
    <location>
        <position position="1"/>
    </location>
</feature>
<feature type="non-terminal residue" evidence="4">
    <location>
        <position position="45"/>
    </location>
</feature>
<dbReference type="EC" id="3.6.4.-" evidence="2"/>
<dbReference type="SMR" id="P85911"/>
<dbReference type="GO" id="GO:0005737">
    <property type="term" value="C:cytoplasm"/>
    <property type="evidence" value="ECO:0007669"/>
    <property type="project" value="UniProtKB-KW"/>
</dbReference>
<dbReference type="GO" id="GO:0005856">
    <property type="term" value="C:cytoskeleton"/>
    <property type="evidence" value="ECO:0007669"/>
    <property type="project" value="UniProtKB-SubCell"/>
</dbReference>
<dbReference type="GO" id="GO:0005524">
    <property type="term" value="F:ATP binding"/>
    <property type="evidence" value="ECO:0007669"/>
    <property type="project" value="UniProtKB-KW"/>
</dbReference>
<dbReference type="GO" id="GO:0016787">
    <property type="term" value="F:hydrolase activity"/>
    <property type="evidence" value="ECO:0007669"/>
    <property type="project" value="UniProtKB-KW"/>
</dbReference>
<dbReference type="FunFam" id="3.30.420.40:FF:000050">
    <property type="entry name" value="Actin, alpha skeletal muscle"/>
    <property type="match status" value="1"/>
</dbReference>
<dbReference type="Gene3D" id="3.30.420.40">
    <property type="match status" value="1"/>
</dbReference>
<dbReference type="InterPro" id="IPR004000">
    <property type="entry name" value="Actin"/>
</dbReference>
<dbReference type="InterPro" id="IPR043129">
    <property type="entry name" value="ATPase_NBD"/>
</dbReference>
<dbReference type="PANTHER" id="PTHR11937">
    <property type="entry name" value="ACTIN"/>
    <property type="match status" value="1"/>
</dbReference>
<dbReference type="Pfam" id="PF00022">
    <property type="entry name" value="Actin"/>
    <property type="match status" value="1"/>
</dbReference>
<dbReference type="SUPFAM" id="SSF53067">
    <property type="entry name" value="Actin-like ATPase domain"/>
    <property type="match status" value="1"/>
</dbReference>
<comment type="function">
    <text evidence="1">Actins are highly conserved proteins that are involved in various types of cell motility and are ubiquitously expressed in all eukaryotic cells. Essential component of cell cytoskeleton; plays an important role in cytoplasmic streaming, cell shape determination, cell division, organelle movement and extension growth (By similarity).</text>
</comment>
<comment type="catalytic activity">
    <reaction evidence="2">
        <text>ATP + H2O = ADP + phosphate + H(+)</text>
        <dbReference type="Rhea" id="RHEA:13065"/>
        <dbReference type="ChEBI" id="CHEBI:15377"/>
        <dbReference type="ChEBI" id="CHEBI:15378"/>
        <dbReference type="ChEBI" id="CHEBI:30616"/>
        <dbReference type="ChEBI" id="CHEBI:43474"/>
        <dbReference type="ChEBI" id="CHEBI:456216"/>
    </reaction>
</comment>
<comment type="subcellular location">
    <subcellularLocation>
        <location evidence="1">Cytoplasm</location>
        <location evidence="1">Cytoskeleton</location>
    </subcellularLocation>
</comment>
<comment type="similarity">
    <text evidence="3">Belongs to the actin family.</text>
</comment>
<name>ACT1_PSEMZ</name>
<reference key="1">
    <citation type="journal article" date="2008" name="J. Proteomics">
        <title>A proteomics approach to identify proteins differentially expressed in Douglas-fir seedlings infected by Phellinus sulphurascens.</title>
        <authorList>
            <person name="Islam M.A."/>
            <person name="Sturrock R.N."/>
            <person name="Ekramoddoullah A.K.M."/>
        </authorList>
    </citation>
    <scope>IDENTIFICATION BY MASS SPECTROMETRY</scope>
</reference>
<organism>
    <name type="scientific">Pseudotsuga menziesii</name>
    <name type="common">Douglas-fir</name>
    <name type="synonym">Abies menziesii</name>
    <dbReference type="NCBI Taxonomy" id="3357"/>
    <lineage>
        <taxon>Eukaryota</taxon>
        <taxon>Viridiplantae</taxon>
        <taxon>Streptophyta</taxon>
        <taxon>Embryophyta</taxon>
        <taxon>Tracheophyta</taxon>
        <taxon>Spermatophyta</taxon>
        <taxon>Pinopsida</taxon>
        <taxon>Pinidae</taxon>
        <taxon>Conifers I</taxon>
        <taxon>Pinales</taxon>
        <taxon>Pinaceae</taxon>
        <taxon>Pseudotsuga</taxon>
    </lineage>
</organism>